<gene>
    <name type="primary">syf2</name>
    <name type="ORF">AN1861</name>
</gene>
<feature type="chain" id="PRO_0000072375" description="Pre-mRNA-splicing factor syf2">
    <location>
        <begin position="1"/>
        <end position="297"/>
    </location>
</feature>
<feature type="region of interest" description="Disordered" evidence="3">
    <location>
        <begin position="1"/>
        <end position="92"/>
    </location>
</feature>
<feature type="coiled-coil region" evidence="2">
    <location>
        <begin position="54"/>
        <end position="79"/>
    </location>
</feature>
<feature type="compositionally biased region" description="Basic and acidic residues" evidence="3">
    <location>
        <begin position="1"/>
        <end position="20"/>
    </location>
</feature>
<feature type="compositionally biased region" description="Polar residues" evidence="3">
    <location>
        <begin position="21"/>
        <end position="32"/>
    </location>
</feature>
<feature type="compositionally biased region" description="Basic and acidic residues" evidence="3">
    <location>
        <begin position="38"/>
        <end position="63"/>
    </location>
</feature>
<feature type="compositionally biased region" description="Basic and acidic residues" evidence="3">
    <location>
        <begin position="71"/>
        <end position="81"/>
    </location>
</feature>
<feature type="compositionally biased region" description="Polar residues" evidence="3">
    <location>
        <begin position="82"/>
        <end position="92"/>
    </location>
</feature>
<protein>
    <recommendedName>
        <fullName>Pre-mRNA-splicing factor syf2</fullName>
    </recommendedName>
</protein>
<accession>Q5BC69</accession>
<accession>C8VKG0</accession>
<proteinExistence type="inferred from homology"/>
<name>SYF2_EMENI</name>
<evidence type="ECO:0000250" key="1"/>
<evidence type="ECO:0000255" key="2"/>
<evidence type="ECO:0000256" key="3">
    <source>
        <dbReference type="SAM" id="MobiDB-lite"/>
    </source>
</evidence>
<evidence type="ECO:0000305" key="4"/>
<keyword id="KW-0175">Coiled coil</keyword>
<keyword id="KW-0507">mRNA processing</keyword>
<keyword id="KW-0508">mRNA splicing</keyword>
<keyword id="KW-0539">Nucleus</keyword>
<keyword id="KW-1185">Reference proteome</keyword>
<keyword id="KW-0747">Spliceosome</keyword>
<dbReference type="EMBL" id="AACD01000029">
    <property type="protein sequence ID" value="EAA65026.1"/>
    <property type="molecule type" value="Genomic_DNA"/>
</dbReference>
<dbReference type="EMBL" id="BN001307">
    <property type="protein sequence ID" value="CBF85710.1"/>
    <property type="molecule type" value="Genomic_DNA"/>
</dbReference>
<dbReference type="RefSeq" id="XP_659465.1">
    <property type="nucleotide sequence ID" value="XM_654373.1"/>
</dbReference>
<dbReference type="SMR" id="Q5BC69"/>
<dbReference type="FunCoup" id="Q5BC69">
    <property type="interactions" value="121"/>
</dbReference>
<dbReference type="STRING" id="227321.Q5BC69"/>
<dbReference type="EnsemblFungi" id="CBF85710">
    <property type="protein sequence ID" value="CBF85710"/>
    <property type="gene ID" value="ANIA_01861"/>
</dbReference>
<dbReference type="KEGG" id="ani:ANIA_01861"/>
<dbReference type="VEuPathDB" id="FungiDB:AN1861"/>
<dbReference type="eggNOG" id="KOG2609">
    <property type="taxonomic scope" value="Eukaryota"/>
</dbReference>
<dbReference type="HOGENOM" id="CLU_051065_0_1_1"/>
<dbReference type="InParanoid" id="Q5BC69"/>
<dbReference type="OMA" id="RRRMHND"/>
<dbReference type="OrthoDB" id="199717at2759"/>
<dbReference type="Proteomes" id="UP000000560">
    <property type="component" value="Chromosome VII"/>
</dbReference>
<dbReference type="GO" id="GO:0071013">
    <property type="term" value="C:catalytic step 2 spliceosome"/>
    <property type="evidence" value="ECO:0000318"/>
    <property type="project" value="GO_Central"/>
</dbReference>
<dbReference type="GO" id="GO:0071014">
    <property type="term" value="C:post-mRNA release spliceosomal complex"/>
    <property type="evidence" value="ECO:0000318"/>
    <property type="project" value="GO_Central"/>
</dbReference>
<dbReference type="GO" id="GO:0000974">
    <property type="term" value="C:Prp19 complex"/>
    <property type="evidence" value="ECO:0000318"/>
    <property type="project" value="GO_Central"/>
</dbReference>
<dbReference type="GO" id="GO:0006397">
    <property type="term" value="P:mRNA processing"/>
    <property type="evidence" value="ECO:0007669"/>
    <property type="project" value="UniProtKB-KW"/>
</dbReference>
<dbReference type="GO" id="GO:0008380">
    <property type="term" value="P:RNA splicing"/>
    <property type="evidence" value="ECO:0007669"/>
    <property type="project" value="UniProtKB-KW"/>
</dbReference>
<dbReference type="InterPro" id="IPR013260">
    <property type="entry name" value="mRNA_splic_SYF2"/>
</dbReference>
<dbReference type="PANTHER" id="PTHR13264">
    <property type="entry name" value="GCIP-INTERACTING PROTEIN P29"/>
    <property type="match status" value="1"/>
</dbReference>
<dbReference type="PANTHER" id="PTHR13264:SF5">
    <property type="entry name" value="PRE-MRNA-SPLICING FACTOR SYF2"/>
    <property type="match status" value="1"/>
</dbReference>
<dbReference type="Pfam" id="PF08231">
    <property type="entry name" value="SYF2"/>
    <property type="match status" value="1"/>
</dbReference>
<sequence>MSSERDQEQLSLEESREGEGKSTTSQTESNASDVAEDPSTKEQTGDKEDSAAARARERKERFKALQARAKSATERNLKETAAETQRLATDPSLLSSLSRKHAFASHNLLKADTEAAGEDFERKRAWDWTVDESEKWDRRMEKKQRHRDDVAFQDYTQDARKVYKRQLREMKPDLEGYENEKMAAIEKAAASGDLEIVETNDGEMIAVDKNGTFYSTADTIGFTESKPDRAAVDKLVADLRKAEEVRLKKRRDRRGGDEDGDVTYINEKNKQFNQKLARFYNKYTTEIRDSFERGTMI</sequence>
<comment type="function">
    <text evidence="1">Involved in pre-mRNA splicing.</text>
</comment>
<comment type="subunit">
    <text evidence="1">Associated with the spliceosome.</text>
</comment>
<comment type="subcellular location">
    <subcellularLocation>
        <location evidence="1">Nucleus</location>
    </subcellularLocation>
</comment>
<comment type="similarity">
    <text evidence="4">Belongs to the SYF2 family.</text>
</comment>
<reference key="1">
    <citation type="journal article" date="2005" name="Nature">
        <title>Sequencing of Aspergillus nidulans and comparative analysis with A. fumigatus and A. oryzae.</title>
        <authorList>
            <person name="Galagan J.E."/>
            <person name="Calvo S.E."/>
            <person name="Cuomo C."/>
            <person name="Ma L.-J."/>
            <person name="Wortman J.R."/>
            <person name="Batzoglou S."/>
            <person name="Lee S.-I."/>
            <person name="Bastuerkmen M."/>
            <person name="Spevak C.C."/>
            <person name="Clutterbuck J."/>
            <person name="Kapitonov V."/>
            <person name="Jurka J."/>
            <person name="Scazzocchio C."/>
            <person name="Farman M.L."/>
            <person name="Butler J."/>
            <person name="Purcell S."/>
            <person name="Harris S."/>
            <person name="Braus G.H."/>
            <person name="Draht O."/>
            <person name="Busch S."/>
            <person name="D'Enfert C."/>
            <person name="Bouchier C."/>
            <person name="Goldman G.H."/>
            <person name="Bell-Pedersen D."/>
            <person name="Griffiths-Jones S."/>
            <person name="Doonan J.H."/>
            <person name="Yu J."/>
            <person name="Vienken K."/>
            <person name="Pain A."/>
            <person name="Freitag M."/>
            <person name="Selker E.U."/>
            <person name="Archer D.B."/>
            <person name="Penalva M.A."/>
            <person name="Oakley B.R."/>
            <person name="Momany M."/>
            <person name="Tanaka T."/>
            <person name="Kumagai T."/>
            <person name="Asai K."/>
            <person name="Machida M."/>
            <person name="Nierman W.C."/>
            <person name="Denning D.W."/>
            <person name="Caddick M.X."/>
            <person name="Hynes M."/>
            <person name="Paoletti M."/>
            <person name="Fischer R."/>
            <person name="Miller B.L."/>
            <person name="Dyer P.S."/>
            <person name="Sachs M.S."/>
            <person name="Osmani S.A."/>
            <person name="Birren B.W."/>
        </authorList>
    </citation>
    <scope>NUCLEOTIDE SEQUENCE [LARGE SCALE GENOMIC DNA]</scope>
    <source>
        <strain>FGSC A4 / ATCC 38163 / CBS 112.46 / NRRL 194 / M139</strain>
    </source>
</reference>
<reference key="2">
    <citation type="journal article" date="2009" name="Fungal Genet. Biol.">
        <title>The 2008 update of the Aspergillus nidulans genome annotation: a community effort.</title>
        <authorList>
            <person name="Wortman J.R."/>
            <person name="Gilsenan J.M."/>
            <person name="Joardar V."/>
            <person name="Deegan J."/>
            <person name="Clutterbuck J."/>
            <person name="Andersen M.R."/>
            <person name="Archer D."/>
            <person name="Bencina M."/>
            <person name="Braus G."/>
            <person name="Coutinho P."/>
            <person name="von Dohren H."/>
            <person name="Doonan J."/>
            <person name="Driessen A.J."/>
            <person name="Durek P."/>
            <person name="Espeso E."/>
            <person name="Fekete E."/>
            <person name="Flipphi M."/>
            <person name="Estrada C.G."/>
            <person name="Geysens S."/>
            <person name="Goldman G."/>
            <person name="de Groot P.W."/>
            <person name="Hansen K."/>
            <person name="Harris S.D."/>
            <person name="Heinekamp T."/>
            <person name="Helmstaedt K."/>
            <person name="Henrissat B."/>
            <person name="Hofmann G."/>
            <person name="Homan T."/>
            <person name="Horio T."/>
            <person name="Horiuchi H."/>
            <person name="James S."/>
            <person name="Jones M."/>
            <person name="Karaffa L."/>
            <person name="Karanyi Z."/>
            <person name="Kato M."/>
            <person name="Keller N."/>
            <person name="Kelly D.E."/>
            <person name="Kiel J.A."/>
            <person name="Kim J.M."/>
            <person name="van der Klei I.J."/>
            <person name="Klis F.M."/>
            <person name="Kovalchuk A."/>
            <person name="Krasevec N."/>
            <person name="Kubicek C.P."/>
            <person name="Liu B."/>
            <person name="Maccabe A."/>
            <person name="Meyer V."/>
            <person name="Mirabito P."/>
            <person name="Miskei M."/>
            <person name="Mos M."/>
            <person name="Mullins J."/>
            <person name="Nelson D.R."/>
            <person name="Nielsen J."/>
            <person name="Oakley B.R."/>
            <person name="Osmani S.A."/>
            <person name="Pakula T."/>
            <person name="Paszewski A."/>
            <person name="Paulsen I."/>
            <person name="Pilsyk S."/>
            <person name="Pocsi I."/>
            <person name="Punt P.J."/>
            <person name="Ram A.F."/>
            <person name="Ren Q."/>
            <person name="Robellet X."/>
            <person name="Robson G."/>
            <person name="Seiboth B."/>
            <person name="van Solingen P."/>
            <person name="Specht T."/>
            <person name="Sun J."/>
            <person name="Taheri-Talesh N."/>
            <person name="Takeshita N."/>
            <person name="Ussery D."/>
            <person name="vanKuyk P.A."/>
            <person name="Visser H."/>
            <person name="van de Vondervoort P.J."/>
            <person name="de Vries R.P."/>
            <person name="Walton J."/>
            <person name="Xiang X."/>
            <person name="Xiong Y."/>
            <person name="Zeng A.P."/>
            <person name="Brandt B.W."/>
            <person name="Cornell M.J."/>
            <person name="van den Hondel C.A."/>
            <person name="Visser J."/>
            <person name="Oliver S.G."/>
            <person name="Turner G."/>
        </authorList>
    </citation>
    <scope>GENOME REANNOTATION</scope>
    <source>
        <strain>FGSC A4 / ATCC 38163 / CBS 112.46 / NRRL 194 / M139</strain>
    </source>
</reference>
<organism>
    <name type="scientific">Emericella nidulans (strain FGSC A4 / ATCC 38163 / CBS 112.46 / NRRL 194 / M139)</name>
    <name type="common">Aspergillus nidulans</name>
    <dbReference type="NCBI Taxonomy" id="227321"/>
    <lineage>
        <taxon>Eukaryota</taxon>
        <taxon>Fungi</taxon>
        <taxon>Dikarya</taxon>
        <taxon>Ascomycota</taxon>
        <taxon>Pezizomycotina</taxon>
        <taxon>Eurotiomycetes</taxon>
        <taxon>Eurotiomycetidae</taxon>
        <taxon>Eurotiales</taxon>
        <taxon>Aspergillaceae</taxon>
        <taxon>Aspergillus</taxon>
        <taxon>Aspergillus subgen. Nidulantes</taxon>
    </lineage>
</organism>